<keyword id="KW-0687">Ribonucleoprotein</keyword>
<keyword id="KW-0689">Ribosomal protein</keyword>
<keyword id="KW-0694">RNA-binding</keyword>
<keyword id="KW-0699">rRNA-binding</keyword>
<accession>B7VPU4</accession>
<evidence type="ECO:0000255" key="1">
    <source>
        <dbReference type="HAMAP-Rule" id="MF_01336"/>
    </source>
</evidence>
<evidence type="ECO:0000305" key="2"/>
<reference key="1">
    <citation type="submission" date="2009-02" db="EMBL/GenBank/DDBJ databases">
        <title>Vibrio splendidus str. LGP32 complete genome.</title>
        <authorList>
            <person name="Mazel D."/>
            <person name="Le Roux F."/>
        </authorList>
    </citation>
    <scope>NUCLEOTIDE SEQUENCE [LARGE SCALE GENOMIC DNA]</scope>
    <source>
        <strain>LGP32</strain>
    </source>
</reference>
<organism>
    <name type="scientific">Vibrio atlanticus (strain LGP32)</name>
    <name type="common">Vibrio splendidus (strain Mel32)</name>
    <dbReference type="NCBI Taxonomy" id="575788"/>
    <lineage>
        <taxon>Bacteria</taxon>
        <taxon>Pseudomonadati</taxon>
        <taxon>Pseudomonadota</taxon>
        <taxon>Gammaproteobacteria</taxon>
        <taxon>Vibrionales</taxon>
        <taxon>Vibrionaceae</taxon>
        <taxon>Vibrio</taxon>
    </lineage>
</organism>
<name>RL25_VIBA3</name>
<comment type="function">
    <text evidence="1">This is one of the proteins that binds to the 5S RNA in the ribosome where it forms part of the central protuberance.</text>
</comment>
<comment type="subunit">
    <text evidence="1">Part of the 50S ribosomal subunit; part of the 5S rRNA/L5/L18/L25 subcomplex. Contacts the 5S rRNA. Binds to the 5S rRNA independently of L5 and L18.</text>
</comment>
<comment type="similarity">
    <text evidence="1">Belongs to the bacterial ribosomal protein bL25 family.</text>
</comment>
<sequence>MKFEAVVRTELGKGASRRLRHAGKFPAVIYGGEAAAVAIELVHADVINQMDKPEFYETITLVIDGAEVKVKPQDVQRHAFKPKVEHMDFIRI</sequence>
<feature type="chain" id="PRO_1000166197" description="Large ribosomal subunit protein bL25">
    <location>
        <begin position="1"/>
        <end position="92"/>
    </location>
</feature>
<proteinExistence type="inferred from homology"/>
<gene>
    <name evidence="1" type="primary">rplY</name>
    <name type="ordered locus">VS_1861</name>
</gene>
<protein>
    <recommendedName>
        <fullName evidence="1">Large ribosomal subunit protein bL25</fullName>
    </recommendedName>
    <alternativeName>
        <fullName evidence="2">50S ribosomal protein L25</fullName>
    </alternativeName>
</protein>
<dbReference type="EMBL" id="FM954972">
    <property type="protein sequence ID" value="CAV19044.1"/>
    <property type="molecule type" value="Genomic_DNA"/>
</dbReference>
<dbReference type="SMR" id="B7VPU4"/>
<dbReference type="STRING" id="575788.VS_1861"/>
<dbReference type="KEGG" id="vsp:VS_1861"/>
<dbReference type="eggNOG" id="COG1825">
    <property type="taxonomic scope" value="Bacteria"/>
</dbReference>
<dbReference type="HOGENOM" id="CLU_137946_0_0_6"/>
<dbReference type="Proteomes" id="UP000009100">
    <property type="component" value="Chromosome 1"/>
</dbReference>
<dbReference type="GO" id="GO:0022625">
    <property type="term" value="C:cytosolic large ribosomal subunit"/>
    <property type="evidence" value="ECO:0007669"/>
    <property type="project" value="TreeGrafter"/>
</dbReference>
<dbReference type="GO" id="GO:0008097">
    <property type="term" value="F:5S rRNA binding"/>
    <property type="evidence" value="ECO:0007669"/>
    <property type="project" value="InterPro"/>
</dbReference>
<dbReference type="GO" id="GO:0003735">
    <property type="term" value="F:structural constituent of ribosome"/>
    <property type="evidence" value="ECO:0007669"/>
    <property type="project" value="InterPro"/>
</dbReference>
<dbReference type="GO" id="GO:0006412">
    <property type="term" value="P:translation"/>
    <property type="evidence" value="ECO:0007669"/>
    <property type="project" value="UniProtKB-UniRule"/>
</dbReference>
<dbReference type="CDD" id="cd00495">
    <property type="entry name" value="Ribosomal_L25_TL5_CTC"/>
    <property type="match status" value="1"/>
</dbReference>
<dbReference type="FunFam" id="2.40.240.10:FF:000002">
    <property type="entry name" value="50S ribosomal protein L25"/>
    <property type="match status" value="1"/>
</dbReference>
<dbReference type="Gene3D" id="2.40.240.10">
    <property type="entry name" value="Ribosomal Protein L25, Chain P"/>
    <property type="match status" value="1"/>
</dbReference>
<dbReference type="HAMAP" id="MF_01336">
    <property type="entry name" value="Ribosomal_bL25"/>
    <property type="match status" value="1"/>
</dbReference>
<dbReference type="InterPro" id="IPR020056">
    <property type="entry name" value="Rbsml_bL25/Gln-tRNA_synth_N"/>
</dbReference>
<dbReference type="InterPro" id="IPR011035">
    <property type="entry name" value="Ribosomal_bL25/Gln-tRNA_synth"/>
</dbReference>
<dbReference type="InterPro" id="IPR020055">
    <property type="entry name" value="Ribosomal_bL25_short"/>
</dbReference>
<dbReference type="InterPro" id="IPR029751">
    <property type="entry name" value="Ribosomal_L25_dom"/>
</dbReference>
<dbReference type="InterPro" id="IPR020930">
    <property type="entry name" value="Ribosomal_uL5_bac-type"/>
</dbReference>
<dbReference type="NCBIfam" id="NF004612">
    <property type="entry name" value="PRK05943.1"/>
    <property type="match status" value="1"/>
</dbReference>
<dbReference type="PANTHER" id="PTHR33284">
    <property type="entry name" value="RIBOSOMAL PROTEIN L25/GLN-TRNA SYNTHETASE, ANTI-CODON-BINDING DOMAIN-CONTAINING PROTEIN"/>
    <property type="match status" value="1"/>
</dbReference>
<dbReference type="PANTHER" id="PTHR33284:SF1">
    <property type="entry name" value="RIBOSOMAL PROTEIN L25_GLN-TRNA SYNTHETASE, ANTI-CODON-BINDING DOMAIN-CONTAINING PROTEIN"/>
    <property type="match status" value="1"/>
</dbReference>
<dbReference type="Pfam" id="PF01386">
    <property type="entry name" value="Ribosomal_L25p"/>
    <property type="match status" value="1"/>
</dbReference>
<dbReference type="SUPFAM" id="SSF50715">
    <property type="entry name" value="Ribosomal protein L25-like"/>
    <property type="match status" value="1"/>
</dbReference>